<name>RNC_MANSM</name>
<accession>Q65VN5</accession>
<feature type="chain" id="PRO_0000228546" description="Ribonuclease 3">
    <location>
        <begin position="1"/>
        <end position="224"/>
    </location>
</feature>
<feature type="domain" description="RNase III" evidence="1">
    <location>
        <begin position="4"/>
        <end position="126"/>
    </location>
</feature>
<feature type="domain" description="DRBM" evidence="1">
    <location>
        <begin position="153"/>
        <end position="223"/>
    </location>
</feature>
<feature type="active site" evidence="1">
    <location>
        <position position="43"/>
    </location>
</feature>
<feature type="active site" evidence="1">
    <location>
        <position position="115"/>
    </location>
</feature>
<feature type="binding site" evidence="1">
    <location>
        <position position="39"/>
    </location>
    <ligand>
        <name>Mg(2+)</name>
        <dbReference type="ChEBI" id="CHEBI:18420"/>
    </ligand>
</feature>
<feature type="binding site" evidence="1">
    <location>
        <position position="112"/>
    </location>
    <ligand>
        <name>Mg(2+)</name>
        <dbReference type="ChEBI" id="CHEBI:18420"/>
    </ligand>
</feature>
<feature type="binding site" evidence="1">
    <location>
        <position position="115"/>
    </location>
    <ligand>
        <name>Mg(2+)</name>
        <dbReference type="ChEBI" id="CHEBI:18420"/>
    </ligand>
</feature>
<evidence type="ECO:0000255" key="1">
    <source>
        <dbReference type="HAMAP-Rule" id="MF_00104"/>
    </source>
</evidence>
<sequence>MNHLDRLQRQISYEFKDITLLKQALTHRSAATKHNERLEFLGDAILNYTIADALYHQFPKCNEGELSRMRATLVREPTLAILARQFKLGEYMALGHGELKSGGFRRESILADCVEAIIGAISLDSSLVSATQITLHWYEKLLREIKPGENQKDPKTRLQEYLQGHRLALPTYDVKDIKGEAHCQTFTIECHVPNLDRTFIGVGSSRRKAEQAAAEQILTALEIK</sequence>
<proteinExistence type="inferred from homology"/>
<comment type="function">
    <text evidence="1">Digests double-stranded RNA. Involved in the processing of primary rRNA transcript to yield the immediate precursors to the large and small rRNAs (23S and 16S). Processes some mRNAs, and tRNAs when they are encoded in the rRNA operon. Processes pre-crRNA and tracrRNA of type II CRISPR loci if present in the organism.</text>
</comment>
<comment type="catalytic activity">
    <reaction evidence="1">
        <text>Endonucleolytic cleavage to 5'-phosphomonoester.</text>
        <dbReference type="EC" id="3.1.26.3"/>
    </reaction>
</comment>
<comment type="cofactor">
    <cofactor evidence="1">
        <name>Mg(2+)</name>
        <dbReference type="ChEBI" id="CHEBI:18420"/>
    </cofactor>
</comment>
<comment type="subunit">
    <text evidence="1">Homodimer.</text>
</comment>
<comment type="subcellular location">
    <subcellularLocation>
        <location evidence="1">Cytoplasm</location>
    </subcellularLocation>
</comment>
<comment type="similarity">
    <text evidence="1">Belongs to the ribonuclease III family.</text>
</comment>
<dbReference type="EC" id="3.1.26.3" evidence="1"/>
<dbReference type="EMBL" id="AE016827">
    <property type="protein sequence ID" value="AAU36975.1"/>
    <property type="molecule type" value="Genomic_DNA"/>
</dbReference>
<dbReference type="RefSeq" id="WP_011199550.1">
    <property type="nucleotide sequence ID" value="NC_006300.1"/>
</dbReference>
<dbReference type="SMR" id="Q65VN5"/>
<dbReference type="STRING" id="221988.MS0368"/>
<dbReference type="KEGG" id="msu:MS0368"/>
<dbReference type="eggNOG" id="COG0571">
    <property type="taxonomic scope" value="Bacteria"/>
</dbReference>
<dbReference type="HOGENOM" id="CLU_000907_1_1_6"/>
<dbReference type="OrthoDB" id="9805026at2"/>
<dbReference type="Proteomes" id="UP000000607">
    <property type="component" value="Chromosome"/>
</dbReference>
<dbReference type="GO" id="GO:0005737">
    <property type="term" value="C:cytoplasm"/>
    <property type="evidence" value="ECO:0007669"/>
    <property type="project" value="UniProtKB-SubCell"/>
</dbReference>
<dbReference type="GO" id="GO:0003725">
    <property type="term" value="F:double-stranded RNA binding"/>
    <property type="evidence" value="ECO:0007669"/>
    <property type="project" value="TreeGrafter"/>
</dbReference>
<dbReference type="GO" id="GO:0046872">
    <property type="term" value="F:metal ion binding"/>
    <property type="evidence" value="ECO:0007669"/>
    <property type="project" value="UniProtKB-KW"/>
</dbReference>
<dbReference type="GO" id="GO:0004525">
    <property type="term" value="F:ribonuclease III activity"/>
    <property type="evidence" value="ECO:0007669"/>
    <property type="project" value="UniProtKB-UniRule"/>
</dbReference>
<dbReference type="GO" id="GO:0019843">
    <property type="term" value="F:rRNA binding"/>
    <property type="evidence" value="ECO:0007669"/>
    <property type="project" value="UniProtKB-KW"/>
</dbReference>
<dbReference type="GO" id="GO:0006397">
    <property type="term" value="P:mRNA processing"/>
    <property type="evidence" value="ECO:0007669"/>
    <property type="project" value="UniProtKB-UniRule"/>
</dbReference>
<dbReference type="GO" id="GO:0010468">
    <property type="term" value="P:regulation of gene expression"/>
    <property type="evidence" value="ECO:0007669"/>
    <property type="project" value="TreeGrafter"/>
</dbReference>
<dbReference type="GO" id="GO:0006364">
    <property type="term" value="P:rRNA processing"/>
    <property type="evidence" value="ECO:0007669"/>
    <property type="project" value="UniProtKB-UniRule"/>
</dbReference>
<dbReference type="GO" id="GO:0008033">
    <property type="term" value="P:tRNA processing"/>
    <property type="evidence" value="ECO:0007669"/>
    <property type="project" value="UniProtKB-KW"/>
</dbReference>
<dbReference type="CDD" id="cd10845">
    <property type="entry name" value="DSRM_RNAse_III_family"/>
    <property type="match status" value="1"/>
</dbReference>
<dbReference type="CDD" id="cd00593">
    <property type="entry name" value="RIBOc"/>
    <property type="match status" value="1"/>
</dbReference>
<dbReference type="FunFam" id="1.10.1520.10:FF:000001">
    <property type="entry name" value="Ribonuclease 3"/>
    <property type="match status" value="1"/>
</dbReference>
<dbReference type="FunFam" id="3.30.160.20:FF:000003">
    <property type="entry name" value="Ribonuclease 3"/>
    <property type="match status" value="1"/>
</dbReference>
<dbReference type="Gene3D" id="3.30.160.20">
    <property type="match status" value="1"/>
</dbReference>
<dbReference type="Gene3D" id="1.10.1520.10">
    <property type="entry name" value="Ribonuclease III domain"/>
    <property type="match status" value="1"/>
</dbReference>
<dbReference type="HAMAP" id="MF_00104">
    <property type="entry name" value="RNase_III"/>
    <property type="match status" value="1"/>
</dbReference>
<dbReference type="InterPro" id="IPR014720">
    <property type="entry name" value="dsRBD_dom"/>
</dbReference>
<dbReference type="InterPro" id="IPR011907">
    <property type="entry name" value="RNase_III"/>
</dbReference>
<dbReference type="InterPro" id="IPR000999">
    <property type="entry name" value="RNase_III_dom"/>
</dbReference>
<dbReference type="InterPro" id="IPR036389">
    <property type="entry name" value="RNase_III_sf"/>
</dbReference>
<dbReference type="NCBIfam" id="TIGR02191">
    <property type="entry name" value="RNaseIII"/>
    <property type="match status" value="1"/>
</dbReference>
<dbReference type="PANTHER" id="PTHR11207:SF0">
    <property type="entry name" value="RIBONUCLEASE 3"/>
    <property type="match status" value="1"/>
</dbReference>
<dbReference type="PANTHER" id="PTHR11207">
    <property type="entry name" value="RIBONUCLEASE III"/>
    <property type="match status" value="1"/>
</dbReference>
<dbReference type="Pfam" id="PF00035">
    <property type="entry name" value="dsrm"/>
    <property type="match status" value="1"/>
</dbReference>
<dbReference type="Pfam" id="PF14622">
    <property type="entry name" value="Ribonucleas_3_3"/>
    <property type="match status" value="1"/>
</dbReference>
<dbReference type="SMART" id="SM00358">
    <property type="entry name" value="DSRM"/>
    <property type="match status" value="1"/>
</dbReference>
<dbReference type="SMART" id="SM00535">
    <property type="entry name" value="RIBOc"/>
    <property type="match status" value="1"/>
</dbReference>
<dbReference type="SUPFAM" id="SSF54768">
    <property type="entry name" value="dsRNA-binding domain-like"/>
    <property type="match status" value="1"/>
</dbReference>
<dbReference type="SUPFAM" id="SSF69065">
    <property type="entry name" value="RNase III domain-like"/>
    <property type="match status" value="1"/>
</dbReference>
<dbReference type="PROSITE" id="PS50137">
    <property type="entry name" value="DS_RBD"/>
    <property type="match status" value="1"/>
</dbReference>
<dbReference type="PROSITE" id="PS00517">
    <property type="entry name" value="RNASE_3_1"/>
    <property type="match status" value="1"/>
</dbReference>
<dbReference type="PROSITE" id="PS50142">
    <property type="entry name" value="RNASE_3_2"/>
    <property type="match status" value="1"/>
</dbReference>
<protein>
    <recommendedName>
        <fullName evidence="1">Ribonuclease 3</fullName>
        <ecNumber evidence="1">3.1.26.3</ecNumber>
    </recommendedName>
    <alternativeName>
        <fullName evidence="1">Ribonuclease III</fullName>
        <shortName evidence="1">RNase III</shortName>
    </alternativeName>
</protein>
<keyword id="KW-0963">Cytoplasm</keyword>
<keyword id="KW-0255">Endonuclease</keyword>
<keyword id="KW-0378">Hydrolase</keyword>
<keyword id="KW-0460">Magnesium</keyword>
<keyword id="KW-0479">Metal-binding</keyword>
<keyword id="KW-0507">mRNA processing</keyword>
<keyword id="KW-0540">Nuclease</keyword>
<keyword id="KW-0694">RNA-binding</keyword>
<keyword id="KW-0698">rRNA processing</keyword>
<keyword id="KW-0699">rRNA-binding</keyword>
<keyword id="KW-0819">tRNA processing</keyword>
<reference key="1">
    <citation type="journal article" date="2004" name="Nat. Biotechnol.">
        <title>The genome sequence of the capnophilic rumen bacterium Mannheimia succiniciproducens.</title>
        <authorList>
            <person name="Hong S.H."/>
            <person name="Kim J.S."/>
            <person name="Lee S.Y."/>
            <person name="In Y.H."/>
            <person name="Choi S.S."/>
            <person name="Rih J.-K."/>
            <person name="Kim C.H."/>
            <person name="Jeong H."/>
            <person name="Hur C.G."/>
            <person name="Kim J.J."/>
        </authorList>
    </citation>
    <scope>NUCLEOTIDE SEQUENCE [LARGE SCALE GENOMIC DNA]</scope>
    <source>
        <strain>KCTC 0769BP / MBEL55E</strain>
    </source>
</reference>
<gene>
    <name evidence="1" type="primary">rnc</name>
    <name type="ordered locus">MS0368</name>
</gene>
<organism>
    <name type="scientific">Mannheimia succiniciproducens (strain KCTC 0769BP / MBEL55E)</name>
    <dbReference type="NCBI Taxonomy" id="221988"/>
    <lineage>
        <taxon>Bacteria</taxon>
        <taxon>Pseudomonadati</taxon>
        <taxon>Pseudomonadota</taxon>
        <taxon>Gammaproteobacteria</taxon>
        <taxon>Pasteurellales</taxon>
        <taxon>Pasteurellaceae</taxon>
        <taxon>Basfia</taxon>
    </lineage>
</organism>